<accession>P25773</accession>
<accession>M3WXJ1</accession>
<keyword id="KW-1003">Cell membrane</keyword>
<keyword id="KW-0968">Cytoplasmic vesicle</keyword>
<keyword id="KW-1015">Disulfide bond</keyword>
<keyword id="KW-0325">Glycoprotein</keyword>
<keyword id="KW-0378">Hydrolase</keyword>
<keyword id="KW-0458">Lysosome</keyword>
<keyword id="KW-0472">Membrane</keyword>
<keyword id="KW-0479">Metal-binding</keyword>
<keyword id="KW-0645">Protease</keyword>
<keyword id="KW-1185">Reference proteome</keyword>
<keyword id="KW-0964">Secreted</keyword>
<keyword id="KW-0732">Signal</keyword>
<keyword id="KW-0788">Thiol protease</keyword>
<keyword id="KW-0862">Zinc</keyword>
<reference key="1">
    <citation type="journal article" date="2007" name="Genome Res.">
        <title>Initial sequence and comparative analysis of the cat genome.</title>
        <authorList>
            <person name="Pontius J.U."/>
            <person name="Mullikin J.C."/>
            <person name="Smith D.R."/>
            <person name="Lindblad-Toh K."/>
            <person name="Gnerre S."/>
            <person name="Clamp M."/>
            <person name="Chang J."/>
            <person name="Stephens R."/>
            <person name="Neelam B."/>
            <person name="Volfovsky N."/>
            <person name="Schaffer A.A."/>
            <person name="Agarwala R."/>
            <person name="Narfstrom K."/>
            <person name="Murphy W.J."/>
            <person name="Giger U."/>
            <person name="Roca A.L."/>
            <person name="Antunes A."/>
            <person name="Menotti-Raymond M."/>
            <person name="Yuhki N."/>
            <person name="Pecon-Slattery J."/>
            <person name="Johnson W.E."/>
            <person name="Bourque G."/>
            <person name="Tesler G."/>
            <person name="O'Brien S.J."/>
        </authorList>
    </citation>
    <scope>NUCLEOTIDE SEQUENCE [LARGE SCALE GENOMIC DNA]</scope>
    <source>
        <strain>Abyssinian</strain>
    </source>
</reference>
<reference key="2">
    <citation type="journal article" date="1989" name="Mol. Endocrinol.">
        <title>Molecular cloning and characterization of a progesterone-dependent cat endometrial secretory protein complementary deoxyribonucleic acid.</title>
        <authorList>
            <person name="Jaffe R.C."/>
            <person name="Donnelly K.M."/>
            <person name="Mavrogianis P.A."/>
            <person name="Verhage H.G."/>
        </authorList>
    </citation>
    <scope>NUCLEOTIDE SEQUENCE [MRNA]</scope>
    <scope>INDUCTION</scope>
    <scope>TISSUE SPECIFICITY</scope>
</reference>
<feature type="signal peptide" evidence="2">
    <location>
        <begin position="1"/>
        <end position="17"/>
    </location>
</feature>
<feature type="propeptide" id="PRO_0000450787" description="Activation peptide" evidence="3">
    <location>
        <begin position="18"/>
        <end position="112"/>
    </location>
</feature>
<feature type="chain" id="PRO_0000050536" description="Cathepsin L">
    <location>
        <begin position="113"/>
        <end position="332"/>
    </location>
</feature>
<feature type="chain" id="PRO_0000450788" description="Cathepsin L heavy chain" evidence="3">
    <location>
        <begin position="113"/>
        <end position="287"/>
    </location>
</feature>
<feature type="propeptide" id="PRO_0000450789" evidence="3">
    <location>
        <begin position="288"/>
        <end position="290"/>
    </location>
</feature>
<feature type="chain" id="PRO_0000450790" description="Cathepsin L light chain" evidence="3">
    <location>
        <begin position="291"/>
        <end position="332"/>
    </location>
</feature>
<feature type="active site" evidence="3">
    <location>
        <position position="137"/>
    </location>
</feature>
<feature type="active site" evidence="3">
    <location>
        <position position="275"/>
    </location>
</feature>
<feature type="active site" evidence="3">
    <location>
        <position position="299"/>
    </location>
</feature>
<feature type="binding site" evidence="3">
    <location>
        <position position="121"/>
    </location>
    <ligand>
        <name>Zn(2+)</name>
        <dbReference type="ChEBI" id="CHEBI:29105"/>
        <label>1</label>
    </ligand>
</feature>
<feature type="binding site" evidence="3">
    <location>
        <position position="162"/>
    </location>
    <ligand>
        <name>Zn(2+)</name>
        <dbReference type="ChEBI" id="CHEBI:29105"/>
        <label>2</label>
    </ligand>
</feature>
<feature type="binding site" evidence="3">
    <location>
        <position position="183"/>
    </location>
    <ligand>
        <name>Zn(2+)</name>
        <dbReference type="ChEBI" id="CHEBI:29105"/>
        <label>3</label>
    </ligand>
</feature>
<feature type="binding site" evidence="3">
    <location>
        <position position="198"/>
    </location>
    <ligand>
        <name>Zn(2+)</name>
        <dbReference type="ChEBI" id="CHEBI:29105"/>
        <label>2</label>
    </ligand>
</feature>
<feature type="binding site" evidence="3">
    <location>
        <position position="208"/>
    </location>
    <ligand>
        <name>Zn(2+)</name>
        <dbReference type="ChEBI" id="CHEBI:29105"/>
        <label>4</label>
    </ligand>
</feature>
<feature type="binding site" evidence="3">
    <location>
        <position position="226"/>
    </location>
    <ligand>
        <name>Zn(2+)</name>
        <dbReference type="ChEBI" id="CHEBI:29105"/>
        <label>3</label>
    </ligand>
</feature>
<feature type="binding site" evidence="3">
    <location>
        <position position="249"/>
    </location>
    <ligand>
        <name>Zn(2+)</name>
        <dbReference type="ChEBI" id="CHEBI:29105"/>
        <label>5</label>
    </ligand>
</feature>
<feature type="binding site" evidence="3">
    <location>
        <position position="272"/>
    </location>
    <ligand>
        <name>Zn(2+)</name>
        <dbReference type="ChEBI" id="CHEBI:29105"/>
        <label>6</label>
    </ligand>
</feature>
<feature type="binding site" evidence="3">
    <location>
        <position position="274"/>
    </location>
    <ligand>
        <name>Zn(2+)</name>
        <dbReference type="ChEBI" id="CHEBI:29105"/>
        <label>7</label>
    </ligand>
</feature>
<feature type="site" description="Cleavage; by autolysis" evidence="3">
    <location>
        <begin position="105"/>
        <end position="106"/>
    </location>
</feature>
<feature type="site" description="Cleavage; by autolysis" evidence="3">
    <location>
        <begin position="106"/>
        <end position="107"/>
    </location>
</feature>
<feature type="site" description="Cleavage; by autolysis" evidence="3">
    <location>
        <begin position="111"/>
        <end position="112"/>
    </location>
</feature>
<feature type="site" description="Cleavage; by autolysis" evidence="3">
    <location>
        <begin position="112"/>
        <end position="113"/>
    </location>
</feature>
<feature type="glycosylation site" description="N-linked (GlcNAc...) asparagine" evidence="5">
    <location>
        <position position="220"/>
    </location>
</feature>
<feature type="disulfide bond" evidence="3">
    <location>
        <begin position="168"/>
        <end position="210"/>
    </location>
</feature>
<feature type="disulfide bond" description="Interchain (between heavy and light chains)" evidence="3">
    <location>
        <begin position="268"/>
        <end position="321"/>
    </location>
</feature>
<comment type="function">
    <text evidence="1 2 3 4">Thiol protease important for the overall degradation of proteins in lysosomes (By similarity). Plays a critical for normal cellular functions such as general protein turnover, antigen processing and bone remodeling. Involved in the solubilization of cross-linked TG/thyroglobulin and in the subsequent release of thyroid hormone thyroxine (T4) by limited proteolysis of TG/thyroglobulin in the thyroid follicle lumen (By similarity). In neuroendocrine chromaffin cells secretory vesicles, catalyzes the prohormone proenkephalin processing to the active enkephalin peptide neurotransmitter (By similarity). In thymus, regulates CD4(+) T cell positive selection by generating the major histocompatibility complex class II (MHCII) bound peptide ligands presented by cortical thymic epithelial cells. Also mediates invariant chain processing in cortical thymic epithelial cells. Major elastin-degrading enzyme at neutral pH. Accumulates as a mature and active enzyme in the extracellular space of antigen presenting cells (APCs) to regulate degradation of the extracellular matrix in the course of inflammation (By similarity). Secreted form generates endostatin from COL18A1 (By similarity). Critical for cardiac morphology and function. Plays an important role in hair follicle morphogenesis and cycling, as well as epidermal differentiation (By similarity). Required for maximal stimulation of steroidogenesis by TIMP1 (By similarity).</text>
</comment>
<comment type="catalytic activity">
    <reaction evidence="3">
        <text>Specificity close to that of papain. As compared to cathepsin B, cathepsin L exhibits higher activity toward protein substrates, but has little activity on Z-Arg-Arg-NHMec, and no peptidyl-dipeptidase activity.</text>
        <dbReference type="EC" id="3.4.22.15"/>
    </reaction>
</comment>
<comment type="activity regulation">
    <text evidence="1 3">Inhibited by the propeptide produced by autocleavage (By similarity). Long isoform of CD74/Ii chain stabilizes the conformation of mature CTSL by binding to its active site and serving as a chaperone to help maintain a pool of mature enzyme in endocytic compartments and extracellular space of APCs. IFNG enhances the conversion into the CTSL mature and active form (By similarity). Inhibited by CST6. Inhibited by the glycopeptide antibiotic teicoplanin. Inhibited by amantadine (By similarity).</text>
</comment>
<comment type="subunit">
    <text evidence="1">Dimer of a heavy and a light chain linked by disulfide bonds. Interacts with Long isoform of CD74/Ii chain; the interaction stabilizes the conformation of mature CTSL.</text>
</comment>
<comment type="subcellular location">
    <subcellularLocation>
        <location evidence="1">Lysosome</location>
    </subcellularLocation>
    <subcellularLocation>
        <location evidence="1">Apical cell membrane</location>
        <topology evidence="1">Peripheral membrane protein</topology>
        <orientation evidence="1">Extracellular side</orientation>
    </subcellularLocation>
    <subcellularLocation>
        <location evidence="4">Cytoplasmic vesicle</location>
        <location evidence="4">Secretory vesicle</location>
        <location evidence="4">Chromaffin granule</location>
    </subcellularLocation>
    <subcellularLocation>
        <location evidence="1">Secreted</location>
        <location evidence="1">Extracellular space</location>
    </subcellularLocation>
    <subcellularLocation>
        <location evidence="1">Secreted</location>
    </subcellularLocation>
    <text evidence="1">Localizes to the apical membrane of thyroid epithelial cells. Released at extracellular space by activated dendritic cells and macrophages.</text>
</comment>
<comment type="tissue specificity">
    <text evidence="9">Expressed in the endometrium.</text>
</comment>
<comment type="induction">
    <text evidence="9">By progesterone.</text>
</comment>
<comment type="PTM">
    <text evidence="1 3">During export along the endocytic pathway, pro-CTSL undergoes several proteolytic cleavages to generate the CTSL single-chain and two-chain mature forms, composed of a heavy chain linked to a light chain by disulfide bonds (By similarity). Autocleavage; produces the single-chain CTSL after cleavage of the propeptide. The cleavage can be intermolecular (By similarity).</text>
</comment>
<comment type="similarity">
    <text evidence="6 7 8">Belongs to the peptidase C1 family.</text>
</comment>
<organism>
    <name type="scientific">Felis catus</name>
    <name type="common">Cat</name>
    <name type="synonym">Felis silvestris catus</name>
    <dbReference type="NCBI Taxonomy" id="9685"/>
    <lineage>
        <taxon>Eukaryota</taxon>
        <taxon>Metazoa</taxon>
        <taxon>Chordata</taxon>
        <taxon>Craniata</taxon>
        <taxon>Vertebrata</taxon>
        <taxon>Euteleostomi</taxon>
        <taxon>Mammalia</taxon>
        <taxon>Eutheria</taxon>
        <taxon>Laurasiatheria</taxon>
        <taxon>Carnivora</taxon>
        <taxon>Feliformia</taxon>
        <taxon>Felidae</taxon>
        <taxon>Felinae</taxon>
        <taxon>Felis</taxon>
    </lineage>
</organism>
<sequence>MHPLLFLAGLCLGVASAAPQLYQSLDARWSQWKATHGKLYGMDEVWRRAVWERNMKMIEQHNREHSQGKHTFTMAMNAFGDMTNEEFRQVMNGLKIQKRKKWKVFQAPFFVEIPSSVDWREKGYVTPVKDQGYCLCCWAFSATGALEGQMFRKTGKLVSLSEQNLVDCSQTEGNEGYSGGLIDDAFQYVKDNGGLDSEESYPYHAQGDSCKYRPENSVANVTDYWDIPSKENELMITLAAVGPISAAIDASLDTFRFYKEGIYYDPSCSSEDVDHGVLVVGYGADGTETENKKYWIIKNSWGTDWGMDGYIKMAKDRDNHCGIASLASFPTV</sequence>
<proteinExistence type="evidence at transcript level"/>
<dbReference type="EC" id="3.4.22.15"/>
<dbReference type="EMBL" id="M31652">
    <property type="protein sequence ID" value="AAA30816.1"/>
    <property type="molecule type" value="mRNA"/>
</dbReference>
<dbReference type="EMBL" id="AANG04000264">
    <property type="status" value="NOT_ANNOTATED_CDS"/>
    <property type="molecule type" value="Genomic_DNA"/>
</dbReference>
<dbReference type="PIR" id="A41404">
    <property type="entry name" value="A41404"/>
</dbReference>
<dbReference type="RefSeq" id="XP_019671416.1">
    <property type="nucleotide sequence ID" value="XM_019815857.1"/>
</dbReference>
<dbReference type="SMR" id="P25773"/>
<dbReference type="STRING" id="9685.ENSFCAP00000019080"/>
<dbReference type="GlyCosmos" id="P25773">
    <property type="glycosylation" value="1 site, No reported glycans"/>
</dbReference>
<dbReference type="PaxDb" id="9685-ENSFCAP00000024996"/>
<dbReference type="Ensembl" id="ENSFCAT00000023094.4">
    <property type="protein sequence ID" value="ENSFCAP00000019080.2"/>
    <property type="gene ID" value="ENSFCAG00000001764.5"/>
</dbReference>
<dbReference type="eggNOG" id="KOG1543">
    <property type="taxonomic scope" value="Eukaryota"/>
</dbReference>
<dbReference type="GeneTree" id="ENSGT00940000154367"/>
<dbReference type="HOGENOM" id="CLU_012184_1_2_1"/>
<dbReference type="InParanoid" id="P25773"/>
<dbReference type="OMA" id="HEGWMTE"/>
<dbReference type="Proteomes" id="UP000011712">
    <property type="component" value="Chromosome D4"/>
</dbReference>
<dbReference type="Bgee" id="ENSFCAG00000001764">
    <property type="expression patterns" value="Expressed in spleen and 2 other cell types or tissues"/>
</dbReference>
<dbReference type="GO" id="GO:0016324">
    <property type="term" value="C:apical plasma membrane"/>
    <property type="evidence" value="ECO:0007669"/>
    <property type="project" value="UniProtKB-SubCell"/>
</dbReference>
<dbReference type="GO" id="GO:0042583">
    <property type="term" value="C:chromaffin granule"/>
    <property type="evidence" value="ECO:0000250"/>
    <property type="project" value="UniProtKB"/>
</dbReference>
<dbReference type="GO" id="GO:0005615">
    <property type="term" value="C:extracellular space"/>
    <property type="evidence" value="ECO:0000250"/>
    <property type="project" value="UniProtKB"/>
</dbReference>
<dbReference type="GO" id="GO:0005764">
    <property type="term" value="C:lysosome"/>
    <property type="evidence" value="ECO:0000250"/>
    <property type="project" value="UniProtKB"/>
</dbReference>
<dbReference type="GO" id="GO:0004197">
    <property type="term" value="F:cysteine-type endopeptidase activity"/>
    <property type="evidence" value="ECO:0000250"/>
    <property type="project" value="UniProtKB"/>
</dbReference>
<dbReference type="GO" id="GO:0004175">
    <property type="term" value="F:endopeptidase activity"/>
    <property type="evidence" value="ECO:0000250"/>
    <property type="project" value="UniProtKB"/>
</dbReference>
<dbReference type="GO" id="GO:0046872">
    <property type="term" value="F:metal ion binding"/>
    <property type="evidence" value="ECO:0007669"/>
    <property type="project" value="UniProtKB-KW"/>
</dbReference>
<dbReference type="GO" id="GO:0048002">
    <property type="term" value="P:antigen processing and presentation of peptide antigen"/>
    <property type="evidence" value="ECO:0000250"/>
    <property type="project" value="UniProtKB"/>
</dbReference>
<dbReference type="GO" id="GO:0043373">
    <property type="term" value="P:CD4-positive, alpha-beta T cell lineage commitment"/>
    <property type="evidence" value="ECO:0000250"/>
    <property type="project" value="UniProtKB"/>
</dbReference>
<dbReference type="GO" id="GO:0030574">
    <property type="term" value="P:collagen catabolic process"/>
    <property type="evidence" value="ECO:0000250"/>
    <property type="project" value="UniProtKB"/>
</dbReference>
<dbReference type="GO" id="GO:0060309">
    <property type="term" value="P:elastin catabolic process"/>
    <property type="evidence" value="ECO:0000250"/>
    <property type="project" value="UniProtKB"/>
</dbReference>
<dbReference type="GO" id="GO:0034230">
    <property type="term" value="P:enkephalin processing"/>
    <property type="evidence" value="ECO:0000250"/>
    <property type="project" value="UniProtKB"/>
</dbReference>
<dbReference type="GO" id="GO:0016540">
    <property type="term" value="P:protein autoprocessing"/>
    <property type="evidence" value="ECO:0000250"/>
    <property type="project" value="UniProtKB"/>
</dbReference>
<dbReference type="GO" id="GO:0051603">
    <property type="term" value="P:proteolysis involved in protein catabolic process"/>
    <property type="evidence" value="ECO:0000318"/>
    <property type="project" value="GO_Central"/>
</dbReference>
<dbReference type="GO" id="GO:0031638">
    <property type="term" value="P:zymogen activation"/>
    <property type="evidence" value="ECO:0000250"/>
    <property type="project" value="UniProtKB"/>
</dbReference>
<dbReference type="CDD" id="cd02248">
    <property type="entry name" value="Peptidase_C1A"/>
    <property type="match status" value="1"/>
</dbReference>
<dbReference type="FunFam" id="3.90.70.10:FF:000332">
    <property type="entry name" value="Cathepsin L1"/>
    <property type="match status" value="1"/>
</dbReference>
<dbReference type="Gene3D" id="3.90.70.10">
    <property type="entry name" value="Cysteine proteinases"/>
    <property type="match status" value="1"/>
</dbReference>
<dbReference type="InterPro" id="IPR038765">
    <property type="entry name" value="Papain-like_cys_pep_sf"/>
</dbReference>
<dbReference type="InterPro" id="IPR025661">
    <property type="entry name" value="Pept_asp_AS"/>
</dbReference>
<dbReference type="InterPro" id="IPR025660">
    <property type="entry name" value="Pept_his_AS"/>
</dbReference>
<dbReference type="InterPro" id="IPR013128">
    <property type="entry name" value="Peptidase_C1A"/>
</dbReference>
<dbReference type="InterPro" id="IPR000668">
    <property type="entry name" value="Peptidase_C1A_C"/>
</dbReference>
<dbReference type="InterPro" id="IPR039417">
    <property type="entry name" value="Peptidase_C1A_papain-like"/>
</dbReference>
<dbReference type="InterPro" id="IPR013201">
    <property type="entry name" value="Prot_inhib_I29"/>
</dbReference>
<dbReference type="PANTHER" id="PTHR12411">
    <property type="entry name" value="CYSTEINE PROTEASE FAMILY C1-RELATED"/>
    <property type="match status" value="1"/>
</dbReference>
<dbReference type="Pfam" id="PF08246">
    <property type="entry name" value="Inhibitor_I29"/>
    <property type="match status" value="1"/>
</dbReference>
<dbReference type="Pfam" id="PF00112">
    <property type="entry name" value="Peptidase_C1"/>
    <property type="match status" value="1"/>
</dbReference>
<dbReference type="PRINTS" id="PR00705">
    <property type="entry name" value="PAPAIN"/>
</dbReference>
<dbReference type="SMART" id="SM00848">
    <property type="entry name" value="Inhibitor_I29"/>
    <property type="match status" value="1"/>
</dbReference>
<dbReference type="SMART" id="SM00645">
    <property type="entry name" value="Pept_C1"/>
    <property type="match status" value="1"/>
</dbReference>
<dbReference type="SUPFAM" id="SSF54001">
    <property type="entry name" value="Cysteine proteinases"/>
    <property type="match status" value="1"/>
</dbReference>
<dbReference type="PROSITE" id="PS00640">
    <property type="entry name" value="THIOL_PROTEASE_ASN"/>
    <property type="match status" value="1"/>
</dbReference>
<dbReference type="PROSITE" id="PS00639">
    <property type="entry name" value="THIOL_PROTEASE_HIS"/>
    <property type="match status" value="1"/>
</dbReference>
<gene>
    <name type="primary">CTSL</name>
    <name type="synonym">CTSL1</name>
</gene>
<evidence type="ECO:0000250" key="1">
    <source>
        <dbReference type="UniProtKB" id="P06797"/>
    </source>
</evidence>
<evidence type="ECO:0000250" key="2">
    <source>
        <dbReference type="UniProtKB" id="P07154"/>
    </source>
</evidence>
<evidence type="ECO:0000250" key="3">
    <source>
        <dbReference type="UniProtKB" id="P07711"/>
    </source>
</evidence>
<evidence type="ECO:0000250" key="4">
    <source>
        <dbReference type="UniProtKB" id="P25975"/>
    </source>
</evidence>
<evidence type="ECO:0000255" key="5"/>
<evidence type="ECO:0000255" key="6">
    <source>
        <dbReference type="PROSITE-ProRule" id="PRU10088"/>
    </source>
</evidence>
<evidence type="ECO:0000255" key="7">
    <source>
        <dbReference type="PROSITE-ProRule" id="PRU10089"/>
    </source>
</evidence>
<evidence type="ECO:0000255" key="8">
    <source>
        <dbReference type="PROSITE-ProRule" id="PRU10090"/>
    </source>
</evidence>
<evidence type="ECO:0000269" key="9">
    <source>
    </source>
</evidence>
<name>CATL1_FELCA</name>
<protein>
    <recommendedName>
        <fullName>Procathepsin L</fullName>
        <ecNumber>3.4.22.15</ecNumber>
    </recommendedName>
    <alternativeName>
        <fullName>Cathepsin L1</fullName>
    </alternativeName>
    <alternativeName>
        <fullName>Progesterone-dependent protein</fullName>
        <shortName>PDP</shortName>
    </alternativeName>
    <component>
        <recommendedName>
            <fullName>Cathepsin L</fullName>
        </recommendedName>
    </component>
    <component>
        <recommendedName>
            <fullName>Cathepsin L heavy chain</fullName>
        </recommendedName>
    </component>
    <component>
        <recommendedName>
            <fullName>Cathepsin L light chain</fullName>
        </recommendedName>
    </component>
</protein>